<evidence type="ECO:0000255" key="1">
    <source>
        <dbReference type="HAMAP-Rule" id="MF_00080"/>
    </source>
</evidence>
<keyword id="KW-0963">Cytoplasm</keyword>
<keyword id="KW-0396">Initiation factor</keyword>
<keyword id="KW-0648">Protein biosynthesis</keyword>
<keyword id="KW-1185">Reference proteome</keyword>
<reference key="1">
    <citation type="journal article" date="1998" name="Science">
        <title>Complete genome sequence of Treponema pallidum, the syphilis spirochete.</title>
        <authorList>
            <person name="Fraser C.M."/>
            <person name="Norris S.J."/>
            <person name="Weinstock G.M."/>
            <person name="White O."/>
            <person name="Sutton G.G."/>
            <person name="Dodson R.J."/>
            <person name="Gwinn M.L."/>
            <person name="Hickey E.K."/>
            <person name="Clayton R.A."/>
            <person name="Ketchum K.A."/>
            <person name="Sodergren E."/>
            <person name="Hardham J.M."/>
            <person name="McLeod M.P."/>
            <person name="Salzberg S.L."/>
            <person name="Peterson J.D."/>
            <person name="Khalak H.G."/>
            <person name="Richardson D.L."/>
            <person name="Howell J.K."/>
            <person name="Chidambaram M."/>
            <person name="Utterback T.R."/>
            <person name="McDonald L.A."/>
            <person name="Artiach P."/>
            <person name="Bowman C."/>
            <person name="Cotton M.D."/>
            <person name="Fujii C."/>
            <person name="Garland S.A."/>
            <person name="Hatch B."/>
            <person name="Horst K."/>
            <person name="Roberts K.M."/>
            <person name="Sandusky M."/>
            <person name="Weidman J.F."/>
            <person name="Smith H.O."/>
            <person name="Venter J.C."/>
        </authorList>
    </citation>
    <scope>NUCLEOTIDE SEQUENCE [LARGE SCALE GENOMIC DNA]</scope>
    <source>
        <strain>Nichols</strain>
    </source>
</reference>
<gene>
    <name evidence="1" type="primary">infC</name>
    <name type="ordered locus">TP_0850</name>
</gene>
<feature type="chain" id="PRO_0000177600" description="Translation initiation factor IF-3">
    <location>
        <begin position="1"/>
        <end position="179"/>
    </location>
</feature>
<proteinExistence type="inferred from homology"/>
<organism>
    <name type="scientific">Treponema pallidum (strain Nichols)</name>
    <dbReference type="NCBI Taxonomy" id="243276"/>
    <lineage>
        <taxon>Bacteria</taxon>
        <taxon>Pseudomonadati</taxon>
        <taxon>Spirochaetota</taxon>
        <taxon>Spirochaetia</taxon>
        <taxon>Spirochaetales</taxon>
        <taxon>Treponemataceae</taxon>
        <taxon>Treponema</taxon>
    </lineage>
</organism>
<accession>O83822</accession>
<name>IF3_TREPA</name>
<sequence length="179" mass="20359">MYWGGSLADNKSLRINGSIRVREVRLVDAVGQQCGVVPTPEALRMARDINLDLVEVAPQASPPVCKILDYGKYRFEMGKKLRDSKKRQRLQTLKEVRMQPKINDHDMAFKAKHIQRFLDEGDKVKVTIRFRGRELAHTDLGFNVLQNVLGRLVCGYSVEKQAAMEGRSMSMTLTPKSKK</sequence>
<protein>
    <recommendedName>
        <fullName evidence="1">Translation initiation factor IF-3</fullName>
    </recommendedName>
</protein>
<comment type="function">
    <text evidence="1">IF-3 binds to the 30S ribosomal subunit and shifts the equilibrium between 70S ribosomes and their 50S and 30S subunits in favor of the free subunits, thus enhancing the availability of 30S subunits on which protein synthesis initiation begins.</text>
</comment>
<comment type="subunit">
    <text evidence="1">Monomer.</text>
</comment>
<comment type="subcellular location">
    <subcellularLocation>
        <location evidence="1">Cytoplasm</location>
    </subcellularLocation>
</comment>
<comment type="similarity">
    <text evidence="1">Belongs to the IF-3 family.</text>
</comment>
<dbReference type="EMBL" id="AE000520">
    <property type="protein sequence ID" value="AAC65816.1"/>
    <property type="molecule type" value="Genomic_DNA"/>
</dbReference>
<dbReference type="PIR" id="B71274">
    <property type="entry name" value="B71274"/>
</dbReference>
<dbReference type="SMR" id="O83822"/>
<dbReference type="IntAct" id="O83822">
    <property type="interactions" value="12"/>
</dbReference>
<dbReference type="STRING" id="243276.TP_0850"/>
<dbReference type="EnsemblBacteria" id="AAC65816">
    <property type="protein sequence ID" value="AAC65816"/>
    <property type="gene ID" value="TP_0850"/>
</dbReference>
<dbReference type="KEGG" id="tpa:TP_0850"/>
<dbReference type="KEGG" id="tpw:TPANIC_0850"/>
<dbReference type="eggNOG" id="COG0290">
    <property type="taxonomic scope" value="Bacteria"/>
</dbReference>
<dbReference type="HOGENOM" id="CLU_054919_3_2_12"/>
<dbReference type="OrthoDB" id="9806014at2"/>
<dbReference type="Proteomes" id="UP000000811">
    <property type="component" value="Chromosome"/>
</dbReference>
<dbReference type="GO" id="GO:0005829">
    <property type="term" value="C:cytosol"/>
    <property type="evidence" value="ECO:0007669"/>
    <property type="project" value="TreeGrafter"/>
</dbReference>
<dbReference type="GO" id="GO:0016020">
    <property type="term" value="C:membrane"/>
    <property type="evidence" value="ECO:0007669"/>
    <property type="project" value="TreeGrafter"/>
</dbReference>
<dbReference type="GO" id="GO:0043022">
    <property type="term" value="F:ribosome binding"/>
    <property type="evidence" value="ECO:0007669"/>
    <property type="project" value="TreeGrafter"/>
</dbReference>
<dbReference type="GO" id="GO:0003743">
    <property type="term" value="F:translation initiation factor activity"/>
    <property type="evidence" value="ECO:0007669"/>
    <property type="project" value="UniProtKB-UniRule"/>
</dbReference>
<dbReference type="GO" id="GO:0032790">
    <property type="term" value="P:ribosome disassembly"/>
    <property type="evidence" value="ECO:0007669"/>
    <property type="project" value="TreeGrafter"/>
</dbReference>
<dbReference type="FunFam" id="3.10.20.80:FF:000001">
    <property type="entry name" value="Translation initiation factor IF-3"/>
    <property type="match status" value="1"/>
</dbReference>
<dbReference type="FunFam" id="3.30.110.10:FF:000001">
    <property type="entry name" value="Translation initiation factor IF-3"/>
    <property type="match status" value="1"/>
</dbReference>
<dbReference type="Gene3D" id="3.30.110.10">
    <property type="entry name" value="Translation initiation factor 3 (IF-3), C-terminal domain"/>
    <property type="match status" value="1"/>
</dbReference>
<dbReference type="Gene3D" id="3.10.20.80">
    <property type="entry name" value="Translation initiation factor 3 (IF-3), N-terminal domain"/>
    <property type="match status" value="1"/>
</dbReference>
<dbReference type="HAMAP" id="MF_00080">
    <property type="entry name" value="IF_3"/>
    <property type="match status" value="1"/>
</dbReference>
<dbReference type="InterPro" id="IPR036788">
    <property type="entry name" value="T_IF-3_C_sf"/>
</dbReference>
<dbReference type="InterPro" id="IPR036787">
    <property type="entry name" value="T_IF-3_N_sf"/>
</dbReference>
<dbReference type="InterPro" id="IPR019813">
    <property type="entry name" value="Translation_initiation_fac3_CS"/>
</dbReference>
<dbReference type="InterPro" id="IPR001288">
    <property type="entry name" value="Translation_initiation_fac_3"/>
</dbReference>
<dbReference type="InterPro" id="IPR019815">
    <property type="entry name" value="Translation_initiation_fac_3_C"/>
</dbReference>
<dbReference type="InterPro" id="IPR019814">
    <property type="entry name" value="Translation_initiation_fac_3_N"/>
</dbReference>
<dbReference type="NCBIfam" id="TIGR00168">
    <property type="entry name" value="infC"/>
    <property type="match status" value="1"/>
</dbReference>
<dbReference type="PANTHER" id="PTHR10938">
    <property type="entry name" value="TRANSLATION INITIATION FACTOR IF-3"/>
    <property type="match status" value="1"/>
</dbReference>
<dbReference type="PANTHER" id="PTHR10938:SF0">
    <property type="entry name" value="TRANSLATION INITIATION FACTOR IF-3, MITOCHONDRIAL"/>
    <property type="match status" value="1"/>
</dbReference>
<dbReference type="Pfam" id="PF00707">
    <property type="entry name" value="IF3_C"/>
    <property type="match status" value="1"/>
</dbReference>
<dbReference type="Pfam" id="PF05198">
    <property type="entry name" value="IF3_N"/>
    <property type="match status" value="1"/>
</dbReference>
<dbReference type="SUPFAM" id="SSF55200">
    <property type="entry name" value="Translation initiation factor IF3, C-terminal domain"/>
    <property type="match status" value="1"/>
</dbReference>
<dbReference type="SUPFAM" id="SSF54364">
    <property type="entry name" value="Translation initiation factor IF3, N-terminal domain"/>
    <property type="match status" value="1"/>
</dbReference>
<dbReference type="PROSITE" id="PS00938">
    <property type="entry name" value="IF3"/>
    <property type="match status" value="1"/>
</dbReference>